<name>NPD_LISIN</name>
<organism>
    <name type="scientific">Listeria innocua serovar 6a (strain ATCC BAA-680 / CLIP 11262)</name>
    <dbReference type="NCBI Taxonomy" id="272626"/>
    <lineage>
        <taxon>Bacteria</taxon>
        <taxon>Bacillati</taxon>
        <taxon>Bacillota</taxon>
        <taxon>Bacilli</taxon>
        <taxon>Bacillales</taxon>
        <taxon>Listeriaceae</taxon>
        <taxon>Listeria</taxon>
    </lineage>
</organism>
<reference key="1">
    <citation type="journal article" date="2001" name="Science">
        <title>Comparative genomics of Listeria species.</title>
        <authorList>
            <person name="Glaser P."/>
            <person name="Frangeul L."/>
            <person name="Buchrieser C."/>
            <person name="Rusniok C."/>
            <person name="Amend A."/>
            <person name="Baquero F."/>
            <person name="Berche P."/>
            <person name="Bloecker H."/>
            <person name="Brandt P."/>
            <person name="Chakraborty T."/>
            <person name="Charbit A."/>
            <person name="Chetouani F."/>
            <person name="Couve E."/>
            <person name="de Daruvar A."/>
            <person name="Dehoux P."/>
            <person name="Domann E."/>
            <person name="Dominguez-Bernal G."/>
            <person name="Duchaud E."/>
            <person name="Durant L."/>
            <person name="Dussurget O."/>
            <person name="Entian K.-D."/>
            <person name="Fsihi H."/>
            <person name="Garcia-del Portillo F."/>
            <person name="Garrido P."/>
            <person name="Gautier L."/>
            <person name="Goebel W."/>
            <person name="Gomez-Lopez N."/>
            <person name="Hain T."/>
            <person name="Hauf J."/>
            <person name="Jackson D."/>
            <person name="Jones L.-M."/>
            <person name="Kaerst U."/>
            <person name="Kreft J."/>
            <person name="Kuhn M."/>
            <person name="Kunst F."/>
            <person name="Kurapkat G."/>
            <person name="Madueno E."/>
            <person name="Maitournam A."/>
            <person name="Mata Vicente J."/>
            <person name="Ng E."/>
            <person name="Nedjari H."/>
            <person name="Nordsiek G."/>
            <person name="Novella S."/>
            <person name="de Pablos B."/>
            <person name="Perez-Diaz J.-C."/>
            <person name="Purcell R."/>
            <person name="Remmel B."/>
            <person name="Rose M."/>
            <person name="Schlueter T."/>
            <person name="Simoes N."/>
            <person name="Tierrez A."/>
            <person name="Vazquez-Boland J.-A."/>
            <person name="Voss H."/>
            <person name="Wehland J."/>
            <person name="Cossart P."/>
        </authorList>
    </citation>
    <scope>NUCLEOTIDE SEQUENCE [LARGE SCALE GENOMIC DNA]</scope>
    <source>
        <strain>ATCC BAA-680 / CLIP 11262</strain>
    </source>
</reference>
<dbReference type="EC" id="2.3.1.286" evidence="1"/>
<dbReference type="EMBL" id="AL596173">
    <property type="protein sequence ID" value="CAC98108.1"/>
    <property type="molecule type" value="Genomic_DNA"/>
</dbReference>
<dbReference type="PIR" id="AD1792">
    <property type="entry name" value="AD1792"/>
</dbReference>
<dbReference type="RefSeq" id="WP_010991426.1">
    <property type="nucleotide sequence ID" value="NC_003212.1"/>
</dbReference>
<dbReference type="SMR" id="Q927A7"/>
<dbReference type="STRING" id="272626.gene:17567269"/>
<dbReference type="KEGG" id="lin:lin2882"/>
<dbReference type="eggNOG" id="COG0846">
    <property type="taxonomic scope" value="Bacteria"/>
</dbReference>
<dbReference type="HOGENOM" id="CLU_023643_3_0_9"/>
<dbReference type="OrthoDB" id="9800582at2"/>
<dbReference type="Proteomes" id="UP000002513">
    <property type="component" value="Chromosome"/>
</dbReference>
<dbReference type="GO" id="GO:0005737">
    <property type="term" value="C:cytoplasm"/>
    <property type="evidence" value="ECO:0007669"/>
    <property type="project" value="UniProtKB-SubCell"/>
</dbReference>
<dbReference type="GO" id="GO:0017136">
    <property type="term" value="F:histone deacetylase activity, NAD-dependent"/>
    <property type="evidence" value="ECO:0007669"/>
    <property type="project" value="TreeGrafter"/>
</dbReference>
<dbReference type="GO" id="GO:0070403">
    <property type="term" value="F:NAD+ binding"/>
    <property type="evidence" value="ECO:0007669"/>
    <property type="project" value="UniProtKB-UniRule"/>
</dbReference>
<dbReference type="CDD" id="cd01411">
    <property type="entry name" value="SIR2H"/>
    <property type="match status" value="1"/>
</dbReference>
<dbReference type="Gene3D" id="3.30.1600.10">
    <property type="entry name" value="SIR2/SIRT2 'Small Domain"/>
    <property type="match status" value="1"/>
</dbReference>
<dbReference type="Gene3D" id="3.40.50.1220">
    <property type="entry name" value="TPP-binding domain"/>
    <property type="match status" value="1"/>
</dbReference>
<dbReference type="HAMAP" id="MF_01968">
    <property type="entry name" value="Sirtuin_ClassU"/>
    <property type="match status" value="1"/>
</dbReference>
<dbReference type="InterPro" id="IPR029035">
    <property type="entry name" value="DHS-like_NAD/FAD-binding_dom"/>
</dbReference>
<dbReference type="InterPro" id="IPR050134">
    <property type="entry name" value="NAD-dep_sirtuin_deacylases"/>
</dbReference>
<dbReference type="InterPro" id="IPR003000">
    <property type="entry name" value="Sirtuin"/>
</dbReference>
<dbReference type="InterPro" id="IPR026591">
    <property type="entry name" value="Sirtuin_cat_small_dom_sf"/>
</dbReference>
<dbReference type="InterPro" id="IPR028628">
    <property type="entry name" value="Sirtuin_class_U"/>
</dbReference>
<dbReference type="InterPro" id="IPR026590">
    <property type="entry name" value="Ssirtuin_cat_dom"/>
</dbReference>
<dbReference type="NCBIfam" id="NF001752">
    <property type="entry name" value="PRK00481.1-1"/>
    <property type="match status" value="1"/>
</dbReference>
<dbReference type="PANTHER" id="PTHR11085:SF4">
    <property type="entry name" value="NAD-DEPENDENT PROTEIN DEACYLASE"/>
    <property type="match status" value="1"/>
</dbReference>
<dbReference type="PANTHER" id="PTHR11085">
    <property type="entry name" value="NAD-DEPENDENT PROTEIN DEACYLASE SIRTUIN-5, MITOCHONDRIAL-RELATED"/>
    <property type="match status" value="1"/>
</dbReference>
<dbReference type="Pfam" id="PF02146">
    <property type="entry name" value="SIR2"/>
    <property type="match status" value="1"/>
</dbReference>
<dbReference type="SUPFAM" id="SSF52467">
    <property type="entry name" value="DHS-like NAD/FAD-binding domain"/>
    <property type="match status" value="1"/>
</dbReference>
<dbReference type="PROSITE" id="PS50305">
    <property type="entry name" value="SIRTUIN"/>
    <property type="match status" value="1"/>
</dbReference>
<proteinExistence type="inferred from homology"/>
<protein>
    <recommendedName>
        <fullName evidence="1">NAD-dependent protein deacetylase</fullName>
        <ecNumber evidence="1">2.3.1.286</ecNumber>
    </recommendedName>
    <alternativeName>
        <fullName evidence="1">Regulatory protein SIR2 homolog</fullName>
    </alternativeName>
</protein>
<accession>Q927A7</accession>
<feature type="chain" id="PRO_0000110325" description="NAD-dependent protein deacetylase">
    <location>
        <begin position="1"/>
        <end position="229"/>
    </location>
</feature>
<feature type="domain" description="Deacetylase sirtuin-type" evidence="2">
    <location>
        <begin position="1"/>
        <end position="229"/>
    </location>
</feature>
<feature type="active site" description="Proton acceptor" evidence="1">
    <location>
        <position position="114"/>
    </location>
</feature>
<feature type="binding site" evidence="1">
    <location>
        <position position="20"/>
    </location>
    <ligand>
        <name>NAD(+)</name>
        <dbReference type="ChEBI" id="CHEBI:57540"/>
    </ligand>
</feature>
<feature type="binding site" evidence="1">
    <location>
        <position position="32"/>
    </location>
    <ligand>
        <name>NAD(+)</name>
        <dbReference type="ChEBI" id="CHEBI:57540"/>
    </ligand>
</feature>
<feature type="binding site" evidence="1">
    <location>
        <position position="96"/>
    </location>
    <ligand>
        <name>NAD(+)</name>
        <dbReference type="ChEBI" id="CHEBI:57540"/>
    </ligand>
</feature>
<feature type="binding site" evidence="1">
    <location>
        <position position="98"/>
    </location>
    <ligand>
        <name>NAD(+)</name>
        <dbReference type="ChEBI" id="CHEBI:57540"/>
    </ligand>
</feature>
<feature type="binding site" evidence="1">
    <location>
        <position position="98"/>
    </location>
    <ligand>
        <name>nicotinamide</name>
        <dbReference type="ChEBI" id="CHEBI:17154"/>
    </ligand>
</feature>
<feature type="binding site" evidence="1">
    <location>
        <position position="99"/>
    </location>
    <ligand>
        <name>NAD(+)</name>
        <dbReference type="ChEBI" id="CHEBI:57540"/>
    </ligand>
</feature>
<feature type="binding site" evidence="1">
    <location>
        <position position="99"/>
    </location>
    <ligand>
        <name>nicotinamide</name>
        <dbReference type="ChEBI" id="CHEBI:17154"/>
    </ligand>
</feature>
<feature type="binding site" evidence="1">
    <location>
        <position position="114"/>
    </location>
    <ligand>
        <name>NAD(+)</name>
        <dbReference type="ChEBI" id="CHEBI:57540"/>
    </ligand>
</feature>
<feature type="binding site" evidence="1">
    <location>
        <position position="181"/>
    </location>
    <ligand>
        <name>NAD(+)</name>
        <dbReference type="ChEBI" id="CHEBI:57540"/>
    </ligand>
</feature>
<feature type="binding site" evidence="1">
    <location>
        <position position="182"/>
    </location>
    <ligand>
        <name>NAD(+)</name>
        <dbReference type="ChEBI" id="CHEBI:57540"/>
    </ligand>
</feature>
<feature type="binding site" evidence="1">
    <location>
        <position position="205"/>
    </location>
    <ligand>
        <name>NAD(+)</name>
        <dbReference type="ChEBI" id="CHEBI:57540"/>
    </ligand>
</feature>
<feature type="binding site" evidence="1">
    <location>
        <position position="223"/>
    </location>
    <ligand>
        <name>NAD(+)</name>
        <dbReference type="ChEBI" id="CHEBI:57540"/>
    </ligand>
</feature>
<evidence type="ECO:0000255" key="1">
    <source>
        <dbReference type="HAMAP-Rule" id="MF_01968"/>
    </source>
</evidence>
<evidence type="ECO:0000255" key="2">
    <source>
        <dbReference type="PROSITE-ProRule" id="PRU00236"/>
    </source>
</evidence>
<gene>
    <name evidence="1" type="primary">cobB</name>
    <name type="ordered locus">lin2882</name>
</gene>
<comment type="function">
    <text evidence="1">NAD-dependent protein deacetylase which modulates the activities of several enzymes which are inactive in their acetylated form.</text>
</comment>
<comment type="catalytic activity">
    <reaction evidence="1">
        <text>N(6)-acetyl-L-lysyl-[protein] + NAD(+) + H2O = 2''-O-acetyl-ADP-D-ribose + nicotinamide + L-lysyl-[protein]</text>
        <dbReference type="Rhea" id="RHEA:43636"/>
        <dbReference type="Rhea" id="RHEA-COMP:9752"/>
        <dbReference type="Rhea" id="RHEA-COMP:10731"/>
        <dbReference type="ChEBI" id="CHEBI:15377"/>
        <dbReference type="ChEBI" id="CHEBI:17154"/>
        <dbReference type="ChEBI" id="CHEBI:29969"/>
        <dbReference type="ChEBI" id="CHEBI:57540"/>
        <dbReference type="ChEBI" id="CHEBI:61930"/>
        <dbReference type="ChEBI" id="CHEBI:83767"/>
        <dbReference type="EC" id="2.3.1.286"/>
    </reaction>
</comment>
<comment type="subcellular location">
    <subcellularLocation>
        <location evidence="1">Cytoplasm</location>
    </subcellularLocation>
</comment>
<comment type="similarity">
    <text evidence="1">Belongs to the sirtuin family. Class U subfamily.</text>
</comment>
<keyword id="KW-0963">Cytoplasm</keyword>
<keyword id="KW-0520">NAD</keyword>
<keyword id="KW-0808">Transferase</keyword>
<sequence length="229" mass="25596">MNNLKEAIKQAEHIVFLTGAGVSVPSGIPDYRSKNGLYAGMSSPEYMLSHTCLVREPEKFYQFVTENMYYPDAVPNTIHRKMAEIEADKNVTVITQNIDGLHEKAGSKKVVNFHGSLYHCYCQKCGRSVSASDYLQSDIHADCGGVVRPDVVLYEEAISESAIDQSLAAIREADLIVIVGTSFRVSPFCNLTDYRNKKARIFAVNKERISLPYPFEMIENDAVKVFAEI</sequence>